<organism>
    <name type="scientific">Drosophila miranda</name>
    <name type="common">Fruit fly</name>
    <dbReference type="NCBI Taxonomy" id="7229"/>
    <lineage>
        <taxon>Eukaryota</taxon>
        <taxon>Metazoa</taxon>
        <taxon>Ecdysozoa</taxon>
        <taxon>Arthropoda</taxon>
        <taxon>Hexapoda</taxon>
        <taxon>Insecta</taxon>
        <taxon>Pterygota</taxon>
        <taxon>Neoptera</taxon>
        <taxon>Endopterygota</taxon>
        <taxon>Diptera</taxon>
        <taxon>Brachycera</taxon>
        <taxon>Muscomorpha</taxon>
        <taxon>Ephydroidea</taxon>
        <taxon>Drosophilidae</taxon>
        <taxon>Drosophila</taxon>
        <taxon>Sophophora</taxon>
    </lineage>
</organism>
<evidence type="ECO:0000255" key="1">
    <source>
        <dbReference type="PROSITE-ProRule" id="PRU00497"/>
    </source>
</evidence>
<evidence type="ECO:0000269" key="2">
    <source>
    </source>
</evidence>
<evidence type="ECO:0000305" key="3"/>
<protein>
    <recommendedName>
        <fullName>Larval cuticle protein III/IV</fullName>
    </recommendedName>
</protein>
<keyword id="KW-0193">Cuticle</keyword>
<keyword id="KW-0903">Direct protein sequencing</keyword>
<keyword id="KW-0732">Signal</keyword>
<dbReference type="EMBL" id="M94252">
    <property type="protein sequence ID" value="AAA28670.1"/>
    <property type="molecule type" value="Genomic_DNA"/>
</dbReference>
<dbReference type="EMBL" id="X97813">
    <property type="protein sequence ID" value="CAA66393.1"/>
    <property type="molecule type" value="Genomic_DNA"/>
</dbReference>
<dbReference type="EMBL" id="X97815">
    <property type="protein sequence ID" value="CAA66395.1"/>
    <property type="molecule type" value="Genomic_DNA"/>
</dbReference>
<dbReference type="EMBL" id="AF219248">
    <property type="protein sequence ID" value="AAF74427.1"/>
    <property type="molecule type" value="Genomic_DNA"/>
</dbReference>
<dbReference type="EMBL" id="AF219249">
    <property type="protein sequence ID" value="AAF74428.1"/>
    <property type="molecule type" value="Genomic_DNA"/>
</dbReference>
<dbReference type="EMBL" id="AF219250">
    <property type="protein sequence ID" value="AAF74429.1"/>
    <property type="molecule type" value="Genomic_DNA"/>
</dbReference>
<dbReference type="EnsemblMetazoa" id="XM_017290523.2">
    <property type="protein sequence ID" value="XP_017146012.1"/>
    <property type="gene ID" value="LOC108158286"/>
</dbReference>
<dbReference type="EnsemblMetazoa" id="XM_017290536.2">
    <property type="protein sequence ID" value="XP_017146025.1"/>
    <property type="gene ID" value="LOC108158295"/>
</dbReference>
<dbReference type="GeneID" id="108158286"/>
<dbReference type="KEGG" id="dmn:108158286"/>
<dbReference type="KEGG" id="dmn:108158295"/>
<dbReference type="FlyBase" id="FBgn0013847">
    <property type="gene designation" value="Dmir\Lcp3"/>
</dbReference>
<dbReference type="OMA" id="ETHGGHE"/>
<dbReference type="OrthoDB" id="44728at7215"/>
<dbReference type="GO" id="GO:0062129">
    <property type="term" value="C:chitin-based extracellular matrix"/>
    <property type="evidence" value="ECO:0007669"/>
    <property type="project" value="TreeGrafter"/>
</dbReference>
<dbReference type="GO" id="GO:0008010">
    <property type="term" value="F:structural constituent of chitin-based larval cuticle"/>
    <property type="evidence" value="ECO:0007669"/>
    <property type="project" value="TreeGrafter"/>
</dbReference>
<dbReference type="InterPro" id="IPR031311">
    <property type="entry name" value="CHIT_BIND_RR_consensus"/>
</dbReference>
<dbReference type="InterPro" id="IPR050468">
    <property type="entry name" value="Cuticle_Struct_Prot"/>
</dbReference>
<dbReference type="InterPro" id="IPR000618">
    <property type="entry name" value="Insect_cuticle"/>
</dbReference>
<dbReference type="PANTHER" id="PTHR10380">
    <property type="entry name" value="CUTICLE PROTEIN"/>
    <property type="match status" value="1"/>
</dbReference>
<dbReference type="PANTHER" id="PTHR10380:SF237">
    <property type="entry name" value="CUTICULAR PROTEIN 65AU, ISOFORM A-RELATED"/>
    <property type="match status" value="1"/>
</dbReference>
<dbReference type="Pfam" id="PF00379">
    <property type="entry name" value="Chitin_bind_4"/>
    <property type="match status" value="1"/>
</dbReference>
<dbReference type="PROSITE" id="PS00233">
    <property type="entry name" value="CHIT_BIND_RR_1"/>
    <property type="match status" value="1"/>
</dbReference>
<dbReference type="PROSITE" id="PS51155">
    <property type="entry name" value="CHIT_BIND_RR_2"/>
    <property type="match status" value="1"/>
</dbReference>
<sequence length="112" mass="11880">MFKILLVCALAALVAANENAEVKELVNEVNPDGFKTVVSLSDGSASQASGDVHGNIDGVFEWVSPEGVHVRVAYKADENGYQPSSDLLPVAPPIPEAILKSLAWIEAHPSKE</sequence>
<accession>Q01774</accession>
<accession>P91630</accession>
<feature type="signal peptide" evidence="2">
    <location>
        <begin position="1"/>
        <end position="16"/>
    </location>
</feature>
<feature type="chain" id="PRO_0000006392" description="Larval cuticle protein III/IV">
    <location>
        <begin position="17"/>
        <end position="112"/>
    </location>
</feature>
<feature type="domain" description="Chitin-binding type R&amp;R" evidence="1">
    <location>
        <begin position="31"/>
        <end position="92"/>
    </location>
</feature>
<proteinExistence type="evidence at protein level"/>
<reference key="1">
    <citation type="journal article" date="1992" name="Proc. Natl. Acad. Sci. U.S.A.">
        <title>Degenerating Y chromosome of Drosophila miranda: a trap for retrotransposons.</title>
        <authorList>
            <person name="Steinemann M."/>
            <person name="Steinemann S."/>
        </authorList>
    </citation>
    <scope>NUCLEOTIDE SEQUENCE [GENOMIC DNA]</scope>
</reference>
<reference key="2">
    <citation type="journal article" date="1996" name="J. Mol. Evol.">
        <title>Evolution of the larval cuticle proteins coded by the secondary sex chromosome pair: X2 and neo-Y of Drosophila miranda: I. Comparison at the DNA sequence level.</title>
        <authorList>
            <person name="Steinemann M."/>
            <person name="Steinemann S."/>
            <person name="Pinsker W."/>
        </authorList>
    </citation>
    <scope>NUCLEOTIDE SEQUENCE [GENOMIC DNA]</scope>
</reference>
<reference key="3">
    <citation type="journal article" date="1993" name="Proc. Natl. Acad. Sci. U.S.A.">
        <title>How Y chromosomes become genetically inert.</title>
        <authorList>
            <person name="Steinemann M."/>
            <person name="Steinemann S."/>
            <person name="Lottspeich F."/>
        </authorList>
    </citation>
    <scope>NUCLEOTIDE SEQUENCE [GENOMIC DNA]</scope>
    <scope>PROTEIN SEQUENCE OF 17-21</scope>
</reference>
<reference key="4">
    <citation type="journal article" date="2000" name="Mol. Biol. Evol.">
        <title>Contrasting patterns of molecular evolution of the genes on the new and old sex chromosomes of Drosophila miranda.</title>
        <authorList>
            <person name="Yi S."/>
            <person name="Charlesworth B."/>
        </authorList>
    </citation>
    <scope>NUCLEOTIDE SEQUENCE [GENOMIC DNA]</scope>
    <source>
        <strain>0101.3</strain>
        <strain>0101.7</strain>
        <strain>MSH38</strain>
    </source>
</reference>
<comment type="function">
    <text>Component of the larval cuticle.</text>
</comment>
<comment type="caution">
    <text evidence="3">The LCP3 and LCP4 genes on chromosome X code for identical proteins. There are also pseudogenes for both LCP3 and LCP4 on chromosome neo-Y.</text>
</comment>
<gene>
    <name type="primary">Lcp3</name>
</gene>
<gene>
    <name type="primary">Lcp4</name>
</gene>
<name>LCP34_DROMI</name>